<name>CLPP1_THEFY</name>
<reference key="1">
    <citation type="journal article" date="2007" name="J. Bacteriol.">
        <title>Genome sequence and analysis of the soil cellulolytic actinomycete Thermobifida fusca YX.</title>
        <authorList>
            <person name="Lykidis A."/>
            <person name="Mavromatis K."/>
            <person name="Ivanova N."/>
            <person name="Anderson I."/>
            <person name="Land M."/>
            <person name="DiBartolo G."/>
            <person name="Martinez M."/>
            <person name="Lapidus A."/>
            <person name="Lucas S."/>
            <person name="Copeland A."/>
            <person name="Richardson P."/>
            <person name="Wilson D.B."/>
            <person name="Kyrpides N."/>
        </authorList>
    </citation>
    <scope>NUCLEOTIDE SEQUENCE [LARGE SCALE GENOMIC DNA]</scope>
    <source>
        <strain>YX</strain>
    </source>
</reference>
<accession>Q47MU3</accession>
<gene>
    <name evidence="1" type="primary">clpP1</name>
    <name type="ordered locus">Tfu_2193</name>
</gene>
<dbReference type="EC" id="3.4.21.92" evidence="1"/>
<dbReference type="EMBL" id="CP000088">
    <property type="protein sequence ID" value="AAZ56226.1"/>
    <property type="molecule type" value="Genomic_DNA"/>
</dbReference>
<dbReference type="RefSeq" id="WP_011292616.1">
    <property type="nucleotide sequence ID" value="NC_007333.1"/>
</dbReference>
<dbReference type="SMR" id="Q47MU3"/>
<dbReference type="STRING" id="269800.Tfu_2193"/>
<dbReference type="MEROPS" id="S14.009"/>
<dbReference type="KEGG" id="tfu:Tfu_2193"/>
<dbReference type="eggNOG" id="COG0740">
    <property type="taxonomic scope" value="Bacteria"/>
</dbReference>
<dbReference type="HOGENOM" id="CLU_058707_3_2_11"/>
<dbReference type="OrthoDB" id="9802800at2"/>
<dbReference type="GO" id="GO:0005737">
    <property type="term" value="C:cytoplasm"/>
    <property type="evidence" value="ECO:0007669"/>
    <property type="project" value="UniProtKB-SubCell"/>
</dbReference>
<dbReference type="GO" id="GO:0009368">
    <property type="term" value="C:endopeptidase Clp complex"/>
    <property type="evidence" value="ECO:0007669"/>
    <property type="project" value="TreeGrafter"/>
</dbReference>
<dbReference type="GO" id="GO:0004176">
    <property type="term" value="F:ATP-dependent peptidase activity"/>
    <property type="evidence" value="ECO:0007669"/>
    <property type="project" value="InterPro"/>
</dbReference>
<dbReference type="GO" id="GO:0051117">
    <property type="term" value="F:ATPase binding"/>
    <property type="evidence" value="ECO:0007669"/>
    <property type="project" value="TreeGrafter"/>
</dbReference>
<dbReference type="GO" id="GO:0004252">
    <property type="term" value="F:serine-type endopeptidase activity"/>
    <property type="evidence" value="ECO:0007669"/>
    <property type="project" value="UniProtKB-UniRule"/>
</dbReference>
<dbReference type="GO" id="GO:0006515">
    <property type="term" value="P:protein quality control for misfolded or incompletely synthesized proteins"/>
    <property type="evidence" value="ECO:0007669"/>
    <property type="project" value="TreeGrafter"/>
</dbReference>
<dbReference type="CDD" id="cd07017">
    <property type="entry name" value="S14_ClpP_2"/>
    <property type="match status" value="1"/>
</dbReference>
<dbReference type="FunFam" id="3.90.226.10:FF:000002">
    <property type="entry name" value="ATP-dependent Clp protease proteolytic subunit"/>
    <property type="match status" value="1"/>
</dbReference>
<dbReference type="Gene3D" id="3.90.226.10">
    <property type="entry name" value="2-enoyl-CoA Hydratase, Chain A, domain 1"/>
    <property type="match status" value="1"/>
</dbReference>
<dbReference type="HAMAP" id="MF_00444">
    <property type="entry name" value="ClpP"/>
    <property type="match status" value="1"/>
</dbReference>
<dbReference type="InterPro" id="IPR001907">
    <property type="entry name" value="ClpP"/>
</dbReference>
<dbReference type="InterPro" id="IPR029045">
    <property type="entry name" value="ClpP/crotonase-like_dom_sf"/>
</dbReference>
<dbReference type="InterPro" id="IPR023562">
    <property type="entry name" value="ClpP/TepA"/>
</dbReference>
<dbReference type="InterPro" id="IPR033135">
    <property type="entry name" value="ClpP_His_AS"/>
</dbReference>
<dbReference type="InterPro" id="IPR018215">
    <property type="entry name" value="ClpP_Ser_AS"/>
</dbReference>
<dbReference type="NCBIfam" id="NF001368">
    <property type="entry name" value="PRK00277.1"/>
    <property type="match status" value="1"/>
</dbReference>
<dbReference type="NCBIfam" id="NF009205">
    <property type="entry name" value="PRK12553.1"/>
    <property type="match status" value="1"/>
</dbReference>
<dbReference type="PANTHER" id="PTHR10381">
    <property type="entry name" value="ATP-DEPENDENT CLP PROTEASE PROTEOLYTIC SUBUNIT"/>
    <property type="match status" value="1"/>
</dbReference>
<dbReference type="PANTHER" id="PTHR10381:SF26">
    <property type="entry name" value="ATP-DEPENDENT CLP PROTEASE PROTEOLYTIC SUBUNIT-LIKE-RELATED"/>
    <property type="match status" value="1"/>
</dbReference>
<dbReference type="Pfam" id="PF00574">
    <property type="entry name" value="CLP_protease"/>
    <property type="match status" value="1"/>
</dbReference>
<dbReference type="PRINTS" id="PR00127">
    <property type="entry name" value="CLPPROTEASEP"/>
</dbReference>
<dbReference type="SUPFAM" id="SSF52096">
    <property type="entry name" value="ClpP/crotonase"/>
    <property type="match status" value="1"/>
</dbReference>
<dbReference type="PROSITE" id="PS00382">
    <property type="entry name" value="CLP_PROTEASE_HIS"/>
    <property type="match status" value="1"/>
</dbReference>
<dbReference type="PROSITE" id="PS00381">
    <property type="entry name" value="CLP_PROTEASE_SER"/>
    <property type="match status" value="1"/>
</dbReference>
<comment type="function">
    <text evidence="1">Cleaves peptides in various proteins in a process that requires ATP hydrolysis. Has a chymotrypsin-like activity. Plays a major role in the degradation of misfolded proteins.</text>
</comment>
<comment type="catalytic activity">
    <reaction evidence="1">
        <text>Hydrolysis of proteins to small peptides in the presence of ATP and magnesium. alpha-casein is the usual test substrate. In the absence of ATP, only oligopeptides shorter than five residues are hydrolyzed (such as succinyl-Leu-Tyr-|-NHMec, and Leu-Tyr-Leu-|-Tyr-Trp, in which cleavage of the -Tyr-|-Leu- and -Tyr-|-Trp bonds also occurs).</text>
        <dbReference type="EC" id="3.4.21.92"/>
    </reaction>
</comment>
<comment type="subunit">
    <text evidence="1">Fourteen ClpP subunits assemble into 2 heptameric rings which stack back to back to give a disk-like structure with a central cavity, resembling the structure of eukaryotic proteasomes.</text>
</comment>
<comment type="subcellular location">
    <subcellularLocation>
        <location evidence="1">Cytoplasm</location>
    </subcellularLocation>
</comment>
<comment type="similarity">
    <text evidence="1">Belongs to the peptidase S14 family.</text>
</comment>
<feature type="chain" id="PRO_0000226476" description="ATP-dependent Clp protease proteolytic subunit 1">
    <location>
        <begin position="1"/>
        <end position="222"/>
    </location>
</feature>
<feature type="active site" description="Nucleophile" evidence="1">
    <location>
        <position position="121"/>
    </location>
</feature>
<feature type="active site" evidence="1">
    <location>
        <position position="146"/>
    </location>
</feature>
<sequence length="222" mass="24792">MSEFNFDPYRRYGGGMAPMAPQSRYVLPSYIERTAYGVKEMNPYNKLFEERIIFVGVQIDDTSANDIIAQMMTLEHIDSDRDITLYINSPGGSFTSLMAIYDTMQFVRPDIQTVCVGQAASAAAVLLAGGTKGKRTALPNSRILIHQPATEGTHGQASDVEIMANEIMRIRHQLETILAKHTGRSVEEISRDIERDKILTAEEAKEYGIVDDVLPYRKASLK</sequence>
<keyword id="KW-0963">Cytoplasm</keyword>
<keyword id="KW-0378">Hydrolase</keyword>
<keyword id="KW-0645">Protease</keyword>
<keyword id="KW-0720">Serine protease</keyword>
<evidence type="ECO:0000255" key="1">
    <source>
        <dbReference type="HAMAP-Rule" id="MF_00444"/>
    </source>
</evidence>
<organism>
    <name type="scientific">Thermobifida fusca (strain YX)</name>
    <dbReference type="NCBI Taxonomy" id="269800"/>
    <lineage>
        <taxon>Bacteria</taxon>
        <taxon>Bacillati</taxon>
        <taxon>Actinomycetota</taxon>
        <taxon>Actinomycetes</taxon>
        <taxon>Streptosporangiales</taxon>
        <taxon>Nocardiopsidaceae</taxon>
        <taxon>Thermobifida</taxon>
    </lineage>
</organism>
<protein>
    <recommendedName>
        <fullName evidence="1">ATP-dependent Clp protease proteolytic subunit 1</fullName>
        <ecNumber evidence="1">3.4.21.92</ecNumber>
    </recommendedName>
    <alternativeName>
        <fullName evidence="1">Endopeptidase Clp 1</fullName>
    </alternativeName>
</protein>
<proteinExistence type="inferred from homology"/>